<accession>B8D903</accession>
<name>GUAC_BUCA5</name>
<comment type="function">
    <text evidence="1">Catalyzes the irreversible NADPH-dependent deamination of GMP to IMP. It functions in the conversion of nucleobase, nucleoside and nucleotide derivatives of G to A nucleotides, and in maintaining the intracellular balance of A and G nucleotides.</text>
</comment>
<comment type="catalytic activity">
    <reaction evidence="1">
        <text>IMP + NH4(+) + NADP(+) = GMP + NADPH + 2 H(+)</text>
        <dbReference type="Rhea" id="RHEA:17185"/>
        <dbReference type="ChEBI" id="CHEBI:15378"/>
        <dbReference type="ChEBI" id="CHEBI:28938"/>
        <dbReference type="ChEBI" id="CHEBI:57783"/>
        <dbReference type="ChEBI" id="CHEBI:58053"/>
        <dbReference type="ChEBI" id="CHEBI:58115"/>
        <dbReference type="ChEBI" id="CHEBI:58349"/>
        <dbReference type="EC" id="1.7.1.7"/>
    </reaction>
</comment>
<comment type="subunit">
    <text evidence="1">Homotetramer.</text>
</comment>
<comment type="similarity">
    <text evidence="1">Belongs to the IMPDH/GMPR family. GuaC type 1 subfamily.</text>
</comment>
<dbReference type="EC" id="1.7.1.7" evidence="1"/>
<dbReference type="EMBL" id="CP001161">
    <property type="protein sequence ID" value="ACL30574.1"/>
    <property type="molecule type" value="Genomic_DNA"/>
</dbReference>
<dbReference type="RefSeq" id="WP_009874161.1">
    <property type="nucleotide sequence ID" value="NC_011833.1"/>
</dbReference>
<dbReference type="SMR" id="B8D903"/>
<dbReference type="KEGG" id="bap:BUAP5A_201"/>
<dbReference type="HOGENOM" id="CLU_022552_5_3_6"/>
<dbReference type="OrthoDB" id="9805398at2"/>
<dbReference type="Proteomes" id="UP000006904">
    <property type="component" value="Chromosome"/>
</dbReference>
<dbReference type="GO" id="GO:0005829">
    <property type="term" value="C:cytosol"/>
    <property type="evidence" value="ECO:0007669"/>
    <property type="project" value="TreeGrafter"/>
</dbReference>
<dbReference type="GO" id="GO:1902560">
    <property type="term" value="C:GMP reductase complex"/>
    <property type="evidence" value="ECO:0007669"/>
    <property type="project" value="InterPro"/>
</dbReference>
<dbReference type="GO" id="GO:0003920">
    <property type="term" value="F:GMP reductase activity"/>
    <property type="evidence" value="ECO:0007669"/>
    <property type="project" value="UniProtKB-UniRule"/>
</dbReference>
<dbReference type="GO" id="GO:0046872">
    <property type="term" value="F:metal ion binding"/>
    <property type="evidence" value="ECO:0007669"/>
    <property type="project" value="UniProtKB-KW"/>
</dbReference>
<dbReference type="GO" id="GO:0006163">
    <property type="term" value="P:purine nucleotide metabolic process"/>
    <property type="evidence" value="ECO:0007669"/>
    <property type="project" value="UniProtKB-UniRule"/>
</dbReference>
<dbReference type="CDD" id="cd00381">
    <property type="entry name" value="IMPDH"/>
    <property type="match status" value="1"/>
</dbReference>
<dbReference type="FunFam" id="3.20.20.70:FF:000012">
    <property type="entry name" value="GMP reductase"/>
    <property type="match status" value="1"/>
</dbReference>
<dbReference type="Gene3D" id="3.20.20.70">
    <property type="entry name" value="Aldolase class I"/>
    <property type="match status" value="1"/>
</dbReference>
<dbReference type="HAMAP" id="MF_00596">
    <property type="entry name" value="GMP_reduct_type1"/>
    <property type="match status" value="1"/>
</dbReference>
<dbReference type="InterPro" id="IPR013785">
    <property type="entry name" value="Aldolase_TIM"/>
</dbReference>
<dbReference type="InterPro" id="IPR050139">
    <property type="entry name" value="GMP_reductase"/>
</dbReference>
<dbReference type="InterPro" id="IPR005993">
    <property type="entry name" value="GMPR"/>
</dbReference>
<dbReference type="InterPro" id="IPR015875">
    <property type="entry name" value="IMP_DH/GMP_Rdtase_CS"/>
</dbReference>
<dbReference type="InterPro" id="IPR001093">
    <property type="entry name" value="IMP_DH_GMPRt"/>
</dbReference>
<dbReference type="NCBIfam" id="TIGR01305">
    <property type="entry name" value="GMP_reduct_1"/>
    <property type="match status" value="1"/>
</dbReference>
<dbReference type="NCBIfam" id="NF003470">
    <property type="entry name" value="PRK05096.1"/>
    <property type="match status" value="1"/>
</dbReference>
<dbReference type="PANTHER" id="PTHR43170">
    <property type="entry name" value="GMP REDUCTASE"/>
    <property type="match status" value="1"/>
</dbReference>
<dbReference type="PANTHER" id="PTHR43170:SF5">
    <property type="entry name" value="GMP REDUCTASE"/>
    <property type="match status" value="1"/>
</dbReference>
<dbReference type="Pfam" id="PF00478">
    <property type="entry name" value="IMPDH"/>
    <property type="match status" value="1"/>
</dbReference>
<dbReference type="PIRSF" id="PIRSF000235">
    <property type="entry name" value="GMP_reductase"/>
    <property type="match status" value="1"/>
</dbReference>
<dbReference type="SMART" id="SM01240">
    <property type="entry name" value="IMPDH"/>
    <property type="match status" value="1"/>
</dbReference>
<dbReference type="SUPFAM" id="SSF51412">
    <property type="entry name" value="Inosine monophosphate dehydrogenase (IMPDH)"/>
    <property type="match status" value="1"/>
</dbReference>
<dbReference type="PROSITE" id="PS00487">
    <property type="entry name" value="IMP_DH_GMP_RED"/>
    <property type="match status" value="1"/>
</dbReference>
<keyword id="KW-0479">Metal-binding</keyword>
<keyword id="KW-0521">NADP</keyword>
<keyword id="KW-0560">Oxidoreductase</keyword>
<keyword id="KW-0630">Potassium</keyword>
<feature type="chain" id="PRO_1000146983" description="GMP reductase">
    <location>
        <begin position="1"/>
        <end position="349"/>
    </location>
</feature>
<feature type="active site" description="Thioimidate intermediate" evidence="1">
    <location>
        <position position="186"/>
    </location>
</feature>
<feature type="binding site" evidence="1">
    <location>
        <begin position="108"/>
        <end position="131"/>
    </location>
    <ligand>
        <name>NADP(+)</name>
        <dbReference type="ChEBI" id="CHEBI:58349"/>
    </ligand>
</feature>
<feature type="binding site" evidence="1">
    <location>
        <position position="181"/>
    </location>
    <ligand>
        <name>K(+)</name>
        <dbReference type="ChEBI" id="CHEBI:29103"/>
    </ligand>
</feature>
<feature type="binding site" evidence="1">
    <location>
        <position position="183"/>
    </location>
    <ligand>
        <name>K(+)</name>
        <dbReference type="ChEBI" id="CHEBI:29103"/>
    </ligand>
</feature>
<feature type="binding site" evidence="1">
    <location>
        <begin position="216"/>
        <end position="239"/>
    </location>
    <ligand>
        <name>NADP(+)</name>
        <dbReference type="ChEBI" id="CHEBI:58349"/>
    </ligand>
</feature>
<evidence type="ECO:0000255" key="1">
    <source>
        <dbReference type="HAMAP-Rule" id="MF_00596"/>
    </source>
</evidence>
<reference key="1">
    <citation type="journal article" date="2009" name="Science">
        <title>The dynamics and time scale of ongoing genomic erosion in symbiotic bacteria.</title>
        <authorList>
            <person name="Moran N.A."/>
            <person name="McLaughlin H.J."/>
            <person name="Sorek R."/>
        </authorList>
    </citation>
    <scope>NUCLEOTIDE SEQUENCE [LARGE SCALE GENOMIC DNA]</scope>
    <source>
        <strain>5A</strain>
    </source>
</reference>
<protein>
    <recommendedName>
        <fullName evidence="1">GMP reductase</fullName>
        <ecNumber evidence="1">1.7.1.7</ecNumber>
    </recommendedName>
    <alternativeName>
        <fullName evidence="1">Guanosine 5'-monophosphate oxidoreductase</fullName>
        <shortName evidence="1">Guanosine monophosphate reductase</shortName>
    </alternativeName>
</protein>
<organism>
    <name type="scientific">Buchnera aphidicola subsp. Acyrthosiphon pisum (strain 5A)</name>
    <dbReference type="NCBI Taxonomy" id="563178"/>
    <lineage>
        <taxon>Bacteria</taxon>
        <taxon>Pseudomonadati</taxon>
        <taxon>Pseudomonadota</taxon>
        <taxon>Gammaproteobacteria</taxon>
        <taxon>Enterobacterales</taxon>
        <taxon>Erwiniaceae</taxon>
        <taxon>Buchnera</taxon>
    </lineage>
</organism>
<gene>
    <name evidence="1" type="primary">guaC</name>
    <name type="ordered locus">BUAP5A_201</name>
</gene>
<proteinExistence type="inferred from homology"/>
<sequence length="349" mass="38320">MRIEEDIKLGFKDVLIRPKRSILKSRSQVNLARCFSFKYSASIWSGIPIIAANMDTIGTFEMVKSLSKFNILTAVHKYYSFEEWKNFVCLSSKEILNHVIVSIGTSNIDFLKIKKIFLLSSELKYICIDVANGYSEHIVSFLKLVRDYFPDKIICAGNVVTGEMVEELILSGADIVKVGIGPGSVCTTRVKTGVGYPQLSAIIECADAAHGLNGQIISDGGCTVSGDIAKAFGGGADFVMLGGMLSGHKECSGDIIEEKSKKYMIFYGMSSVSAMQRYEGKIAGYRASEGKTVKIPFRGGVDSTIRDILGGLRSSCTYVGAEKLKELTKRTTFIRVTEQENCIFNAFKE</sequence>